<sequence>MKLILMMNLFEMFDPSTSNNLSMNWLFMMLPIIIFPSIFWLIQSRIMFIMKTLMNFMYNEFKVVSKSKYQSNIIIFISLMLYIMITNIFSLIPYVFTLTSHLLLNMILSLTLWFSFLIYLIYNNYIMFLSHLVPLNSPVFLMNFMVIIELISLIIRPWTLSIRLSANLISGHLILTLLGIFISNFISILPINLMIQNMLLTLEIFMSMIQSYVFSILLILYFSESN</sequence>
<dbReference type="EMBL" id="L06178">
    <property type="protein sequence ID" value="AAB96802.1"/>
    <property type="molecule type" value="Genomic_DNA"/>
</dbReference>
<dbReference type="EMBL" id="M87065">
    <property type="protein sequence ID" value="AAA31634.1"/>
    <property type="molecule type" value="Genomic_DNA"/>
</dbReference>
<dbReference type="PIR" id="A42622">
    <property type="entry name" value="A42622"/>
</dbReference>
<dbReference type="RefSeq" id="NP_008086.1">
    <property type="nucleotide sequence ID" value="NC_001566.1"/>
</dbReference>
<dbReference type="SMR" id="Q00275"/>
<dbReference type="GeneID" id="807696"/>
<dbReference type="CTD" id="4508"/>
<dbReference type="GO" id="GO:0005743">
    <property type="term" value="C:mitochondrial inner membrane"/>
    <property type="evidence" value="ECO:0007669"/>
    <property type="project" value="UniProtKB-SubCell"/>
</dbReference>
<dbReference type="GO" id="GO:0045259">
    <property type="term" value="C:proton-transporting ATP synthase complex"/>
    <property type="evidence" value="ECO:0007669"/>
    <property type="project" value="UniProtKB-KW"/>
</dbReference>
<dbReference type="GO" id="GO:0046933">
    <property type="term" value="F:proton-transporting ATP synthase activity, rotational mechanism"/>
    <property type="evidence" value="ECO:0007669"/>
    <property type="project" value="TreeGrafter"/>
</dbReference>
<dbReference type="CDD" id="cd00310">
    <property type="entry name" value="ATP-synt_Fo_a_6"/>
    <property type="match status" value="1"/>
</dbReference>
<dbReference type="Gene3D" id="1.20.120.220">
    <property type="entry name" value="ATP synthase, F0 complex, subunit A"/>
    <property type="match status" value="1"/>
</dbReference>
<dbReference type="InterPro" id="IPR000568">
    <property type="entry name" value="ATP_synth_F0_asu"/>
</dbReference>
<dbReference type="InterPro" id="IPR023011">
    <property type="entry name" value="ATP_synth_F0_asu_AS"/>
</dbReference>
<dbReference type="InterPro" id="IPR045083">
    <property type="entry name" value="ATP_synth_F0_asu_bact/mt"/>
</dbReference>
<dbReference type="InterPro" id="IPR035908">
    <property type="entry name" value="F0_ATP_A_sf"/>
</dbReference>
<dbReference type="NCBIfam" id="TIGR01131">
    <property type="entry name" value="ATP_synt_6_or_A"/>
    <property type="match status" value="1"/>
</dbReference>
<dbReference type="PANTHER" id="PTHR11410">
    <property type="entry name" value="ATP SYNTHASE SUBUNIT A"/>
    <property type="match status" value="1"/>
</dbReference>
<dbReference type="PANTHER" id="PTHR11410:SF0">
    <property type="entry name" value="ATP SYNTHASE SUBUNIT A"/>
    <property type="match status" value="1"/>
</dbReference>
<dbReference type="Pfam" id="PF00119">
    <property type="entry name" value="ATP-synt_A"/>
    <property type="match status" value="1"/>
</dbReference>
<dbReference type="PRINTS" id="PR00123">
    <property type="entry name" value="ATPASEA"/>
</dbReference>
<dbReference type="SUPFAM" id="SSF81336">
    <property type="entry name" value="F1F0 ATP synthase subunit A"/>
    <property type="match status" value="1"/>
</dbReference>
<dbReference type="PROSITE" id="PS00449">
    <property type="entry name" value="ATPASE_A"/>
    <property type="match status" value="1"/>
</dbReference>
<reference key="1">
    <citation type="journal article" date="1992" name="Mol. Biol. Evol.">
        <title>The cytochrome b and ATPase genes of honeybee mitochondrial DNA.</title>
        <authorList>
            <person name="Crozier R.H."/>
            <person name="Crozier Y.C."/>
        </authorList>
    </citation>
    <scope>NUCLEOTIDE SEQUENCE [GENOMIC DNA]</scope>
    <source>
        <tissue>Thorax</tissue>
    </source>
</reference>
<reference key="2">
    <citation type="journal article" date="1993" name="Genetics">
        <title>The mitochondrial genome of the honeybee Apis mellifera: complete sequence and genome organization.</title>
        <authorList>
            <person name="Crozier R.H."/>
            <person name="Crozier Y.C."/>
        </authorList>
    </citation>
    <scope>NUCLEOTIDE SEQUENCE [GENOMIC DNA]</scope>
    <source>
        <tissue>Thorax</tissue>
    </source>
</reference>
<keyword id="KW-0066">ATP synthesis</keyword>
<keyword id="KW-0138">CF(0)</keyword>
<keyword id="KW-0375">Hydrogen ion transport</keyword>
<keyword id="KW-0406">Ion transport</keyword>
<keyword id="KW-0472">Membrane</keyword>
<keyword id="KW-0496">Mitochondrion</keyword>
<keyword id="KW-0999">Mitochondrion inner membrane</keyword>
<keyword id="KW-0812">Transmembrane</keyword>
<keyword id="KW-1133">Transmembrane helix</keyword>
<keyword id="KW-0813">Transport</keyword>
<gene>
    <name type="primary">ATP6</name>
</gene>
<organism>
    <name type="scientific">Apis mellifera ligustica</name>
    <name type="common">Common honeybee</name>
    <name type="synonym">Italian honeybee</name>
    <dbReference type="NCBI Taxonomy" id="7469"/>
    <lineage>
        <taxon>Eukaryota</taxon>
        <taxon>Metazoa</taxon>
        <taxon>Ecdysozoa</taxon>
        <taxon>Arthropoda</taxon>
        <taxon>Hexapoda</taxon>
        <taxon>Insecta</taxon>
        <taxon>Pterygota</taxon>
        <taxon>Neoptera</taxon>
        <taxon>Endopterygota</taxon>
        <taxon>Hymenoptera</taxon>
        <taxon>Apocrita</taxon>
        <taxon>Aculeata</taxon>
        <taxon>Apoidea</taxon>
        <taxon>Anthophila</taxon>
        <taxon>Apidae</taxon>
        <taxon>Apis</taxon>
    </lineage>
</organism>
<evidence type="ECO:0000255" key="1"/>
<evidence type="ECO:0000305" key="2"/>
<accession>Q00275</accession>
<geneLocation type="mitochondrion"/>
<protein>
    <recommendedName>
        <fullName>ATP synthase subunit a</fullName>
    </recommendedName>
    <alternativeName>
        <fullName>F-ATPase protein 6</fullName>
    </alternativeName>
</protein>
<name>ATP6_APILI</name>
<proteinExistence type="inferred from homology"/>
<feature type="chain" id="PRO_0000082087" description="ATP synthase subunit a">
    <location>
        <begin position="1"/>
        <end position="226"/>
    </location>
</feature>
<feature type="transmembrane region" description="Helical" evidence="1">
    <location>
        <begin position="22"/>
        <end position="42"/>
    </location>
</feature>
<feature type="transmembrane region" description="Helical" evidence="1">
    <location>
        <begin position="73"/>
        <end position="93"/>
    </location>
</feature>
<feature type="transmembrane region" description="Helical" evidence="1">
    <location>
        <begin position="102"/>
        <end position="122"/>
    </location>
</feature>
<feature type="transmembrane region" description="Helical" evidence="1">
    <location>
        <begin position="135"/>
        <end position="155"/>
    </location>
</feature>
<feature type="transmembrane region" description="Helical" evidence="1">
    <location>
        <begin position="173"/>
        <end position="193"/>
    </location>
</feature>
<feature type="transmembrane region" description="Helical" evidence="1">
    <location>
        <begin position="202"/>
        <end position="222"/>
    </location>
</feature>
<comment type="function">
    <text>Mitochondrial membrane ATP synthase (F(1)F(0) ATP synthase or Complex V) produces ATP from ADP in the presence of a proton gradient across the membrane which is generated by electron transport complexes of the respiratory chain. F-type ATPases consist of two structural domains, F(1) - containing the extramembraneous catalytic core and F(0) - containing the membrane proton channel, linked together by a central stalk and a peripheral stalk. During catalysis, ATP synthesis in the catalytic domain of F(1) is coupled via a rotary mechanism of the central stalk subunits to proton translocation. Key component of the proton channel; it may play a direct role in the translocation of protons across the membrane.</text>
</comment>
<comment type="subunit">
    <text>F-type ATPases have 2 components, CF(1) - the catalytic core - and CF(0) - the membrane proton channel. CF(1) has five subunits: alpha(3), beta(3), gamma(1), delta(1), epsilon(1). CF(0) has three main subunits: a, b and c.</text>
</comment>
<comment type="subcellular location">
    <subcellularLocation>
        <location>Mitochondrion inner membrane</location>
        <topology>Multi-pass membrane protein</topology>
    </subcellularLocation>
</comment>
<comment type="similarity">
    <text evidence="2">Belongs to the ATPase A chain family.</text>
</comment>